<protein>
    <recommendedName>
        <fullName evidence="3">Cytosolic carboxypeptidase 2</fullName>
        <ecNumber evidence="3">3.4.17.-</ecNumber>
    </recommendedName>
    <alternativeName>
        <fullName>ATP/GTP-binding protein-like 2</fullName>
    </alternativeName>
    <alternativeName>
        <fullName evidence="6">Protein deglutamylase CCP2</fullName>
    </alternativeName>
    <alternativeName>
        <fullName>Testis-expressed protein 25</fullName>
    </alternativeName>
</protein>
<comment type="function">
    <text evidence="3">Metallocarboxypeptidase that mediates deglutamylation of target proteins. Catalyzes the deglutamylation of polyglutamate side chains generated by post-translational polyglutamylation in proteins such as tubulins. Also removes gene-encoded polyglutamates from the carboxy-terminus of target proteins such as MYLK. Does not show detyrosinase or deglycylase activities from the carboxy-terminus of tubulin.</text>
</comment>
<comment type="function">
    <text evidence="3">Metallocarboxypeptidase that mediates deglutamylation of tubulin and non-tubulin target proteins. Catalyzes the removal of polyglutamate side chains present on the gamma-carboxyl group of glutamate residues within the C-terminal tail of tubulin protein. Specifically cleaves tubulin long-side-chains, while it is not able to remove the branching point glutamate. Also catalyzes the removal of polyglutamate residues from the carboxy-terminus of non-tubulin proteins.</text>
</comment>
<comment type="catalytic activity">
    <reaction evidence="3">
        <text>(L-glutamyl)(n+1)-gamma-L-glutamyl-L-glutamyl-[protein] + H2O = (L-glutamyl)(n)-gamma-L-glutamyl-L-glutamyl-[protein] + L-glutamate</text>
        <dbReference type="Rhea" id="RHEA:60004"/>
        <dbReference type="Rhea" id="RHEA-COMP:15519"/>
        <dbReference type="Rhea" id="RHEA-COMP:15675"/>
        <dbReference type="ChEBI" id="CHEBI:15377"/>
        <dbReference type="ChEBI" id="CHEBI:29985"/>
        <dbReference type="ChEBI" id="CHEBI:143623"/>
    </reaction>
    <physiologicalReaction direction="left-to-right" evidence="3">
        <dbReference type="Rhea" id="RHEA:60005"/>
    </physiologicalReaction>
</comment>
<comment type="cofactor">
    <cofactor evidence="1">
        <name>Zn(2+)</name>
        <dbReference type="ChEBI" id="CHEBI:29105"/>
    </cofactor>
    <text evidence="1">Binds 1 zinc ion per subunit.</text>
</comment>
<comment type="subcellular location">
    <subcellularLocation>
        <location evidence="3">Cytoplasm</location>
        <location evidence="3">Cytosol</location>
    </subcellularLocation>
    <subcellularLocation>
        <location evidence="2">Cytoplasm</location>
        <location evidence="2">Cytoskeleton</location>
        <location evidence="2">Microtubule organizing center</location>
        <location evidence="2">Centrosome</location>
        <location evidence="2">Centriole</location>
    </subcellularLocation>
    <subcellularLocation>
        <location evidence="2">Cytoplasm</location>
        <location evidence="2">Cytoskeleton</location>
        <location evidence="2">Cilium basal body</location>
    </subcellularLocation>
    <text evidence="2">Colocalizes with gamma-tubulin in the centrioles and with glutamylated tubulin in the basal bodies of ciliated cells.</text>
</comment>
<comment type="similarity">
    <text evidence="6">Belongs to the peptidase M14 family.</text>
</comment>
<comment type="caution">
    <text evidence="2 3">Was initially shown to catalyze the removal of carboxy-terminus tyrosine from alpha-tubulin (By similarity). However, later studies did not identified any detyrosinase or deglycylase activities from the carboxy-terminus of tubulin (By similarity).</text>
</comment>
<comment type="caution">
    <text evidence="2">Was originally thought to have detyrosinating activity from C-terminal positions on tubulin.</text>
</comment>
<reference key="1">
    <citation type="submission" date="2007-06" db="EMBL/GenBank/DDBJ databases">
        <authorList>
            <consortium name="NIH - Zebrafish Gene Collection (ZGC) project"/>
        </authorList>
    </citation>
    <scope>NUCLEOTIDE SEQUENCE [LARGE SCALE MRNA]</scope>
    <source>
        <tissue>Olfactory epithelium</tissue>
    </source>
</reference>
<organism>
    <name type="scientific">Danio rerio</name>
    <name type="common">Zebrafish</name>
    <name type="synonym">Brachydanio rerio</name>
    <dbReference type="NCBI Taxonomy" id="7955"/>
    <lineage>
        <taxon>Eukaryota</taxon>
        <taxon>Metazoa</taxon>
        <taxon>Chordata</taxon>
        <taxon>Craniata</taxon>
        <taxon>Vertebrata</taxon>
        <taxon>Euteleostomi</taxon>
        <taxon>Actinopterygii</taxon>
        <taxon>Neopterygii</taxon>
        <taxon>Teleostei</taxon>
        <taxon>Ostariophysi</taxon>
        <taxon>Cypriniformes</taxon>
        <taxon>Danionidae</taxon>
        <taxon>Danioninae</taxon>
        <taxon>Danio</taxon>
    </lineage>
</organism>
<dbReference type="EC" id="3.4.17.-" evidence="3"/>
<dbReference type="EMBL" id="BC146747">
    <property type="protein sequence ID" value="AAI46748.1"/>
    <property type="molecule type" value="mRNA"/>
</dbReference>
<dbReference type="SMR" id="A6H8T7"/>
<dbReference type="FunCoup" id="A6H8T7">
    <property type="interactions" value="351"/>
</dbReference>
<dbReference type="STRING" id="7955.ENSDARP00000116922"/>
<dbReference type="MEROPS" id="M14.029"/>
<dbReference type="PaxDb" id="7955-ENSDARP00000116922"/>
<dbReference type="AGR" id="ZFIN:ZDB-GENE-070719-6"/>
<dbReference type="ZFIN" id="ZDB-GENE-070719-6">
    <property type="gene designation" value="agbl2"/>
</dbReference>
<dbReference type="eggNOG" id="KOG3641">
    <property type="taxonomic scope" value="Eukaryota"/>
</dbReference>
<dbReference type="InParanoid" id="A6H8T7"/>
<dbReference type="PhylomeDB" id="A6H8T7"/>
<dbReference type="PRO" id="PR:A6H8T7"/>
<dbReference type="Proteomes" id="UP000000437">
    <property type="component" value="Unplaced"/>
</dbReference>
<dbReference type="GO" id="GO:0005814">
    <property type="term" value="C:centriole"/>
    <property type="evidence" value="ECO:0000250"/>
    <property type="project" value="UniProtKB"/>
</dbReference>
<dbReference type="GO" id="GO:0036064">
    <property type="term" value="C:ciliary basal body"/>
    <property type="evidence" value="ECO:0000250"/>
    <property type="project" value="UniProtKB"/>
</dbReference>
<dbReference type="GO" id="GO:0005737">
    <property type="term" value="C:cytoplasm"/>
    <property type="evidence" value="ECO:0000318"/>
    <property type="project" value="GO_Central"/>
</dbReference>
<dbReference type="GO" id="GO:0005829">
    <property type="term" value="C:cytosol"/>
    <property type="evidence" value="ECO:0000250"/>
    <property type="project" value="UniProtKB"/>
</dbReference>
<dbReference type="GO" id="GO:0015630">
    <property type="term" value="C:microtubule cytoskeleton"/>
    <property type="evidence" value="ECO:0000318"/>
    <property type="project" value="GO_Central"/>
</dbReference>
<dbReference type="GO" id="GO:0004181">
    <property type="term" value="F:metallocarboxypeptidase activity"/>
    <property type="evidence" value="ECO:0000250"/>
    <property type="project" value="UniProtKB"/>
</dbReference>
<dbReference type="GO" id="GO:0015631">
    <property type="term" value="F:tubulin binding"/>
    <property type="evidence" value="ECO:0000318"/>
    <property type="project" value="GO_Central"/>
</dbReference>
<dbReference type="GO" id="GO:0008270">
    <property type="term" value="F:zinc ion binding"/>
    <property type="evidence" value="ECO:0007669"/>
    <property type="project" value="InterPro"/>
</dbReference>
<dbReference type="GO" id="GO:0035610">
    <property type="term" value="P:protein side chain deglutamylation"/>
    <property type="evidence" value="ECO:0000250"/>
    <property type="project" value="UniProtKB"/>
</dbReference>
<dbReference type="GO" id="GO:0006508">
    <property type="term" value="P:proteolysis"/>
    <property type="evidence" value="ECO:0007669"/>
    <property type="project" value="UniProtKB-KW"/>
</dbReference>
<dbReference type="CDD" id="cd06907">
    <property type="entry name" value="M14_AGBL2-3_like"/>
    <property type="match status" value="1"/>
</dbReference>
<dbReference type="FunFam" id="3.40.630.10:FF:000011">
    <property type="entry name" value="cytosolic carboxypeptidase 2 isoform X1"/>
    <property type="match status" value="1"/>
</dbReference>
<dbReference type="Gene3D" id="2.60.40.3120">
    <property type="match status" value="1"/>
</dbReference>
<dbReference type="Gene3D" id="3.40.630.10">
    <property type="entry name" value="Zn peptidases"/>
    <property type="match status" value="1"/>
</dbReference>
<dbReference type="InterPro" id="IPR050821">
    <property type="entry name" value="Cytosolic_carboxypeptidase"/>
</dbReference>
<dbReference type="InterPro" id="IPR040626">
    <property type="entry name" value="Pepdidase_M14_N"/>
</dbReference>
<dbReference type="InterPro" id="IPR000834">
    <property type="entry name" value="Peptidase_M14"/>
</dbReference>
<dbReference type="PANTHER" id="PTHR12756">
    <property type="entry name" value="CYTOSOLIC CARBOXYPEPTIDASE"/>
    <property type="match status" value="1"/>
</dbReference>
<dbReference type="PANTHER" id="PTHR12756:SF41">
    <property type="entry name" value="CYTOSOLIC CARBOXYPEPTIDASE 2"/>
    <property type="match status" value="1"/>
</dbReference>
<dbReference type="Pfam" id="PF18027">
    <property type="entry name" value="Pepdidase_M14_N"/>
    <property type="match status" value="1"/>
</dbReference>
<dbReference type="Pfam" id="PF00246">
    <property type="entry name" value="Peptidase_M14"/>
    <property type="match status" value="1"/>
</dbReference>
<dbReference type="SUPFAM" id="SSF53187">
    <property type="entry name" value="Zn-dependent exopeptidases"/>
    <property type="match status" value="1"/>
</dbReference>
<dbReference type="PROSITE" id="PS52035">
    <property type="entry name" value="PEPTIDASE_M14"/>
    <property type="match status" value="1"/>
</dbReference>
<gene>
    <name type="primary">zte25</name>
    <name type="synonym">agbl2</name>
    <name type="synonym">ccp2</name>
    <name type="ORF">zgc:165648</name>
</gene>
<feature type="chain" id="PRO_0000403758" description="Cytosolic carboxypeptidase 2">
    <location>
        <begin position="1"/>
        <end position="721"/>
    </location>
</feature>
<feature type="domain" description="Peptidase M14" evidence="4">
    <location>
        <begin position="334"/>
        <end position="605"/>
    </location>
</feature>
<feature type="region of interest" description="Disordered" evidence="5">
    <location>
        <begin position="43"/>
        <end position="71"/>
    </location>
</feature>
<feature type="region of interest" description="Disordered" evidence="5">
    <location>
        <begin position="645"/>
        <end position="721"/>
    </location>
</feature>
<feature type="compositionally biased region" description="Low complexity" evidence="5">
    <location>
        <begin position="50"/>
        <end position="59"/>
    </location>
</feature>
<feature type="compositionally biased region" description="Low complexity" evidence="5">
    <location>
        <begin position="647"/>
        <end position="660"/>
    </location>
</feature>
<feature type="compositionally biased region" description="Basic residues" evidence="5">
    <location>
        <begin position="672"/>
        <end position="688"/>
    </location>
</feature>
<feature type="compositionally biased region" description="Polar residues" evidence="5">
    <location>
        <begin position="703"/>
        <end position="714"/>
    </location>
</feature>
<feature type="active site" description="Proton donor/acceptor" evidence="4">
    <location>
        <position position="569"/>
    </location>
</feature>
<feature type="binding site" evidence="4">
    <location>
        <position position="400"/>
    </location>
    <ligand>
        <name>Zn(2+)</name>
        <dbReference type="ChEBI" id="CHEBI:29105"/>
        <note>catalytic</note>
    </ligand>
</feature>
<feature type="binding site" evidence="4">
    <location>
        <position position="403"/>
    </location>
    <ligand>
        <name>Zn(2+)</name>
        <dbReference type="ChEBI" id="CHEBI:29105"/>
        <note>catalytic</note>
    </ligand>
</feature>
<feature type="binding site" evidence="4">
    <location>
        <position position="496"/>
    </location>
    <ligand>
        <name>Zn(2+)</name>
        <dbReference type="ChEBI" id="CHEBI:29105"/>
        <note>catalytic</note>
    </ligand>
</feature>
<keyword id="KW-0121">Carboxypeptidase</keyword>
<keyword id="KW-0966">Cell projection</keyword>
<keyword id="KW-0963">Cytoplasm</keyword>
<keyword id="KW-0206">Cytoskeleton</keyword>
<keyword id="KW-0378">Hydrolase</keyword>
<keyword id="KW-0479">Metal-binding</keyword>
<keyword id="KW-0482">Metalloprotease</keyword>
<keyword id="KW-0645">Protease</keyword>
<keyword id="KW-1185">Reference proteome</keyword>
<keyword id="KW-0862">Zinc</keyword>
<evidence type="ECO:0000250" key="1"/>
<evidence type="ECO:0000250" key="2">
    <source>
        <dbReference type="UniProtKB" id="Q5U5Z8"/>
    </source>
</evidence>
<evidence type="ECO:0000250" key="3">
    <source>
        <dbReference type="UniProtKB" id="Q8CDK2"/>
    </source>
</evidence>
<evidence type="ECO:0000255" key="4">
    <source>
        <dbReference type="PROSITE-ProRule" id="PRU01379"/>
    </source>
</evidence>
<evidence type="ECO:0000256" key="5">
    <source>
        <dbReference type="SAM" id="MobiDB-lite"/>
    </source>
</evidence>
<evidence type="ECO:0000305" key="6"/>
<sequence length="721" mass="82236">MQKKSDDPYERLLLLHLQHYGFLSDNSSGIPIKREWEGIQDSTASDMINSSSPSESSDSNLEEEQEESKPCSNFFSLNKALRTRQLVFDFDGERPIPRLRDPLDLFTIPSTSCPFQGVRWPIECDVICDKIQHIEWDPSEPETFYQPTGNEQTPMPVGEVRGNTVYCIDPATKASSFTYSRVGGSRGPIKSATSCANNQKEPTLAFESRFECGNLQKAVQVGQYDYGLTLRTDLYTTKHTQWFYFRVRNMREGVTYRFTIINLMKSSSLYGAGMCPLLYSEKTAWLKGEGWKRTGSSIRYYRNNIEQDGKALYSLTWTLEFPYDGDTCYLAHCYPYTYSKLQHYLREVISDPVRAAYCKLRVLCRSLAGNAVYVLTITAPSSSLAERKAKRAVVVTARVHPGETNGSWMMQGFLEFLLSDLPDAHLLRETFIFKVIPMLNPDGVVVGNYRCSLAGRDLNRNYRSMLRDSFPCIWYTRNMVKRLLAEREVVVYCDFHGHSRKNNVFMYGCNERKDASQCLQERVFPLMMSKNAKDKFSFRSCKFKMHKSKEGTGRIVMWRLGIRNSYTMESTFGGSTLGDRKGTHFSTLDLKSMGYCFCDTLLDFCDPDPAKMTRCLEELGVLLKQEIRRKLGREVDSLENLSDIDIESSTSGSNSTESDGLPVHLLNVTNQGKKKLLRSRKERNRLRQGRVQSAGKTDASKPYSCQTLNATTQHGDTEDQS</sequence>
<proteinExistence type="evidence at transcript level"/>
<name>CBPC2_DANRE</name>
<accession>A6H8T7</accession>